<protein>
    <recommendedName>
        <fullName evidence="1">Small ribosomal subunit protein uS7</fullName>
    </recommendedName>
    <alternativeName>
        <fullName evidence="2">30S ribosomal protein S7</fullName>
    </alternativeName>
</protein>
<accession>B9KZZ1</accession>
<proteinExistence type="inferred from homology"/>
<name>RS7_THERP</name>
<gene>
    <name evidence="1" type="primary">rpsG</name>
    <name type="ordered locus">trd_0988</name>
</gene>
<comment type="function">
    <text evidence="1">One of the primary rRNA binding proteins, it binds directly to 16S rRNA where it nucleates assembly of the head domain of the 30S subunit. Is located at the subunit interface close to the decoding center, probably blocks exit of the E-site tRNA.</text>
</comment>
<comment type="subunit">
    <text evidence="1">Part of the 30S ribosomal subunit. Contacts proteins S9 and S11.</text>
</comment>
<comment type="similarity">
    <text evidence="1">Belongs to the universal ribosomal protein uS7 family.</text>
</comment>
<organism>
    <name type="scientific">Thermomicrobium roseum (strain ATCC 27502 / DSM 5159 / P-2)</name>
    <dbReference type="NCBI Taxonomy" id="309801"/>
    <lineage>
        <taxon>Bacteria</taxon>
        <taxon>Pseudomonadati</taxon>
        <taxon>Thermomicrobiota</taxon>
        <taxon>Thermomicrobia</taxon>
        <taxon>Thermomicrobiales</taxon>
        <taxon>Thermomicrobiaceae</taxon>
        <taxon>Thermomicrobium</taxon>
    </lineage>
</organism>
<feature type="chain" id="PRO_1000135632" description="Small ribosomal subunit protein uS7">
    <location>
        <begin position="1"/>
        <end position="156"/>
    </location>
</feature>
<evidence type="ECO:0000255" key="1">
    <source>
        <dbReference type="HAMAP-Rule" id="MF_00480"/>
    </source>
</evidence>
<evidence type="ECO:0000305" key="2"/>
<sequence length="156" mass="18043">MPRRPKYERRTIPPDPKYGSELLQRFINKVMKRGKKSLAERIVYSALDIVAQRTGQHPLEVFQRAIHNASPLLEVKPRRVGGATYQVPVQVEPHRRVSLAMRWLIQSARNRSGYKFVDKLAAEIIDAANNTGATIKKRDDTHRMAEANRAFAHYRW</sequence>
<keyword id="KW-1185">Reference proteome</keyword>
<keyword id="KW-0687">Ribonucleoprotein</keyword>
<keyword id="KW-0689">Ribosomal protein</keyword>
<keyword id="KW-0694">RNA-binding</keyword>
<keyword id="KW-0699">rRNA-binding</keyword>
<keyword id="KW-0820">tRNA-binding</keyword>
<dbReference type="EMBL" id="CP001275">
    <property type="protein sequence ID" value="ACM05807.1"/>
    <property type="molecule type" value="Genomic_DNA"/>
</dbReference>
<dbReference type="RefSeq" id="WP_015921951.1">
    <property type="nucleotide sequence ID" value="NC_011959.1"/>
</dbReference>
<dbReference type="SMR" id="B9KZZ1"/>
<dbReference type="STRING" id="309801.trd_0988"/>
<dbReference type="KEGG" id="tro:trd_0988"/>
<dbReference type="eggNOG" id="COG0049">
    <property type="taxonomic scope" value="Bacteria"/>
</dbReference>
<dbReference type="HOGENOM" id="CLU_072226_1_1_0"/>
<dbReference type="OrthoDB" id="9807653at2"/>
<dbReference type="Proteomes" id="UP000000447">
    <property type="component" value="Chromosome"/>
</dbReference>
<dbReference type="GO" id="GO:0015935">
    <property type="term" value="C:small ribosomal subunit"/>
    <property type="evidence" value="ECO:0007669"/>
    <property type="project" value="InterPro"/>
</dbReference>
<dbReference type="GO" id="GO:0019843">
    <property type="term" value="F:rRNA binding"/>
    <property type="evidence" value="ECO:0007669"/>
    <property type="project" value="UniProtKB-UniRule"/>
</dbReference>
<dbReference type="GO" id="GO:0003735">
    <property type="term" value="F:structural constituent of ribosome"/>
    <property type="evidence" value="ECO:0007669"/>
    <property type="project" value="InterPro"/>
</dbReference>
<dbReference type="GO" id="GO:0000049">
    <property type="term" value="F:tRNA binding"/>
    <property type="evidence" value="ECO:0007669"/>
    <property type="project" value="UniProtKB-UniRule"/>
</dbReference>
<dbReference type="GO" id="GO:0006412">
    <property type="term" value="P:translation"/>
    <property type="evidence" value="ECO:0007669"/>
    <property type="project" value="UniProtKB-UniRule"/>
</dbReference>
<dbReference type="CDD" id="cd14869">
    <property type="entry name" value="uS7_Bacteria"/>
    <property type="match status" value="1"/>
</dbReference>
<dbReference type="FunFam" id="1.10.455.10:FF:000001">
    <property type="entry name" value="30S ribosomal protein S7"/>
    <property type="match status" value="1"/>
</dbReference>
<dbReference type="Gene3D" id="1.10.455.10">
    <property type="entry name" value="Ribosomal protein S7 domain"/>
    <property type="match status" value="1"/>
</dbReference>
<dbReference type="HAMAP" id="MF_00480_B">
    <property type="entry name" value="Ribosomal_uS7_B"/>
    <property type="match status" value="1"/>
</dbReference>
<dbReference type="InterPro" id="IPR000235">
    <property type="entry name" value="Ribosomal_uS7"/>
</dbReference>
<dbReference type="InterPro" id="IPR005717">
    <property type="entry name" value="Ribosomal_uS7_bac/org-type"/>
</dbReference>
<dbReference type="InterPro" id="IPR020606">
    <property type="entry name" value="Ribosomal_uS7_CS"/>
</dbReference>
<dbReference type="InterPro" id="IPR023798">
    <property type="entry name" value="Ribosomal_uS7_dom"/>
</dbReference>
<dbReference type="InterPro" id="IPR036823">
    <property type="entry name" value="Ribosomal_uS7_dom_sf"/>
</dbReference>
<dbReference type="NCBIfam" id="TIGR01029">
    <property type="entry name" value="rpsG_bact"/>
    <property type="match status" value="1"/>
</dbReference>
<dbReference type="PANTHER" id="PTHR11205">
    <property type="entry name" value="RIBOSOMAL PROTEIN S7"/>
    <property type="match status" value="1"/>
</dbReference>
<dbReference type="Pfam" id="PF00177">
    <property type="entry name" value="Ribosomal_S7"/>
    <property type="match status" value="1"/>
</dbReference>
<dbReference type="PIRSF" id="PIRSF002122">
    <property type="entry name" value="RPS7p_RPS7a_RPS5e_RPS7o"/>
    <property type="match status" value="1"/>
</dbReference>
<dbReference type="SUPFAM" id="SSF47973">
    <property type="entry name" value="Ribosomal protein S7"/>
    <property type="match status" value="1"/>
</dbReference>
<dbReference type="PROSITE" id="PS00052">
    <property type="entry name" value="RIBOSOMAL_S7"/>
    <property type="match status" value="1"/>
</dbReference>
<reference key="1">
    <citation type="journal article" date="2009" name="PLoS ONE">
        <title>Complete genome sequence of the aerobic CO-oxidizing thermophile Thermomicrobium roseum.</title>
        <authorList>
            <person name="Wu D."/>
            <person name="Raymond J."/>
            <person name="Wu M."/>
            <person name="Chatterji S."/>
            <person name="Ren Q."/>
            <person name="Graham J.E."/>
            <person name="Bryant D.A."/>
            <person name="Robb F."/>
            <person name="Colman A."/>
            <person name="Tallon L.J."/>
            <person name="Badger J.H."/>
            <person name="Madupu R."/>
            <person name="Ward N.L."/>
            <person name="Eisen J.A."/>
        </authorList>
    </citation>
    <scope>NUCLEOTIDE SEQUENCE [LARGE SCALE GENOMIC DNA]</scope>
    <source>
        <strain>ATCC 27502 / DSM 5159 / P-2</strain>
    </source>
</reference>